<dbReference type="EMBL" id="AE016825">
    <property type="protein sequence ID" value="AAQ61830.1"/>
    <property type="molecule type" value="Genomic_DNA"/>
</dbReference>
<dbReference type="RefSeq" id="WP_011137717.1">
    <property type="nucleotide sequence ID" value="NC_005085.1"/>
</dbReference>
<dbReference type="SMR" id="Q7NQG8"/>
<dbReference type="STRING" id="243365.CV_4170"/>
<dbReference type="GeneID" id="66366358"/>
<dbReference type="KEGG" id="cvi:CV_4170"/>
<dbReference type="eggNOG" id="COG0256">
    <property type="taxonomic scope" value="Bacteria"/>
</dbReference>
<dbReference type="HOGENOM" id="CLU_098841_0_1_4"/>
<dbReference type="OrthoDB" id="9810939at2"/>
<dbReference type="Proteomes" id="UP000001424">
    <property type="component" value="Chromosome"/>
</dbReference>
<dbReference type="GO" id="GO:0022625">
    <property type="term" value="C:cytosolic large ribosomal subunit"/>
    <property type="evidence" value="ECO:0007669"/>
    <property type="project" value="TreeGrafter"/>
</dbReference>
<dbReference type="GO" id="GO:0008097">
    <property type="term" value="F:5S rRNA binding"/>
    <property type="evidence" value="ECO:0007669"/>
    <property type="project" value="TreeGrafter"/>
</dbReference>
<dbReference type="GO" id="GO:0003735">
    <property type="term" value="F:structural constituent of ribosome"/>
    <property type="evidence" value="ECO:0007669"/>
    <property type="project" value="InterPro"/>
</dbReference>
<dbReference type="GO" id="GO:0006412">
    <property type="term" value="P:translation"/>
    <property type="evidence" value="ECO:0007669"/>
    <property type="project" value="UniProtKB-UniRule"/>
</dbReference>
<dbReference type="CDD" id="cd00432">
    <property type="entry name" value="Ribosomal_L18_L5e"/>
    <property type="match status" value="1"/>
</dbReference>
<dbReference type="FunFam" id="3.30.420.100:FF:000001">
    <property type="entry name" value="50S ribosomal protein L18"/>
    <property type="match status" value="1"/>
</dbReference>
<dbReference type="Gene3D" id="3.30.420.100">
    <property type="match status" value="1"/>
</dbReference>
<dbReference type="HAMAP" id="MF_01337_B">
    <property type="entry name" value="Ribosomal_uL18_B"/>
    <property type="match status" value="1"/>
</dbReference>
<dbReference type="InterPro" id="IPR004389">
    <property type="entry name" value="Ribosomal_uL18_bac-type"/>
</dbReference>
<dbReference type="InterPro" id="IPR005484">
    <property type="entry name" value="Ribosomal_uL18_bac/euk"/>
</dbReference>
<dbReference type="NCBIfam" id="TIGR00060">
    <property type="entry name" value="L18_bact"/>
    <property type="match status" value="1"/>
</dbReference>
<dbReference type="PANTHER" id="PTHR12899">
    <property type="entry name" value="39S RIBOSOMAL PROTEIN L18, MITOCHONDRIAL"/>
    <property type="match status" value="1"/>
</dbReference>
<dbReference type="PANTHER" id="PTHR12899:SF3">
    <property type="entry name" value="LARGE RIBOSOMAL SUBUNIT PROTEIN UL18M"/>
    <property type="match status" value="1"/>
</dbReference>
<dbReference type="Pfam" id="PF00861">
    <property type="entry name" value="Ribosomal_L18p"/>
    <property type="match status" value="1"/>
</dbReference>
<dbReference type="SUPFAM" id="SSF53137">
    <property type="entry name" value="Translational machinery components"/>
    <property type="match status" value="1"/>
</dbReference>
<organism>
    <name type="scientific">Chromobacterium violaceum (strain ATCC 12472 / DSM 30191 / JCM 1249 / CCUG 213 / NBRC 12614 / NCIMB 9131 / NCTC 9757 / MK)</name>
    <dbReference type="NCBI Taxonomy" id="243365"/>
    <lineage>
        <taxon>Bacteria</taxon>
        <taxon>Pseudomonadati</taxon>
        <taxon>Pseudomonadota</taxon>
        <taxon>Betaproteobacteria</taxon>
        <taxon>Neisseriales</taxon>
        <taxon>Chromobacteriaceae</taxon>
        <taxon>Chromobacterium</taxon>
    </lineage>
</organism>
<sequence length="117" mass="12774">MDKKQTRLRRARKTRARIAELKMVRLSVHRTNSHIYAQIIDETGNKVLASASSLEADVRSAMANGGNVAAAAVIGKRIAEKAKAAGIEQVAFDRSGFKYHGRMKALADAAREHGLVF</sequence>
<evidence type="ECO:0000255" key="1">
    <source>
        <dbReference type="HAMAP-Rule" id="MF_01337"/>
    </source>
</evidence>
<evidence type="ECO:0000305" key="2"/>
<accession>Q7NQG8</accession>
<protein>
    <recommendedName>
        <fullName evidence="1">Large ribosomal subunit protein uL18</fullName>
    </recommendedName>
    <alternativeName>
        <fullName evidence="2">50S ribosomal protein L18</fullName>
    </alternativeName>
</protein>
<feature type="chain" id="PRO_0000131247" description="Large ribosomal subunit protein uL18">
    <location>
        <begin position="1"/>
        <end position="117"/>
    </location>
</feature>
<gene>
    <name evidence="1" type="primary">rplR</name>
    <name type="ordered locus">CV_4170</name>
</gene>
<keyword id="KW-1185">Reference proteome</keyword>
<keyword id="KW-0687">Ribonucleoprotein</keyword>
<keyword id="KW-0689">Ribosomal protein</keyword>
<keyword id="KW-0694">RNA-binding</keyword>
<keyword id="KW-0699">rRNA-binding</keyword>
<name>RL18_CHRVO</name>
<proteinExistence type="inferred from homology"/>
<comment type="function">
    <text evidence="1">This is one of the proteins that bind and probably mediate the attachment of the 5S RNA into the large ribosomal subunit, where it forms part of the central protuberance.</text>
</comment>
<comment type="subunit">
    <text evidence="1">Part of the 50S ribosomal subunit; part of the 5S rRNA/L5/L18/L25 subcomplex. Contacts the 5S and 23S rRNAs.</text>
</comment>
<comment type="similarity">
    <text evidence="1">Belongs to the universal ribosomal protein uL18 family.</text>
</comment>
<reference key="1">
    <citation type="journal article" date="2003" name="Proc. Natl. Acad. Sci. U.S.A.">
        <title>The complete genome sequence of Chromobacterium violaceum reveals remarkable and exploitable bacterial adaptability.</title>
        <authorList>
            <person name="Vasconcelos A.T.R."/>
            <person name="de Almeida D.F."/>
            <person name="Hungria M."/>
            <person name="Guimaraes C.T."/>
            <person name="Antonio R.V."/>
            <person name="Almeida F.C."/>
            <person name="de Almeida L.G.P."/>
            <person name="de Almeida R."/>
            <person name="Alves-Gomes J.A."/>
            <person name="Andrade E.M."/>
            <person name="Araripe J."/>
            <person name="de Araujo M.F.F."/>
            <person name="Astolfi-Filho S."/>
            <person name="Azevedo V."/>
            <person name="Baptista A.J."/>
            <person name="Bataus L.A.M."/>
            <person name="Batista J.S."/>
            <person name="Belo A."/>
            <person name="van den Berg C."/>
            <person name="Bogo M."/>
            <person name="Bonatto S."/>
            <person name="Bordignon J."/>
            <person name="Brigido M.M."/>
            <person name="Brito C.A."/>
            <person name="Brocchi M."/>
            <person name="Burity H.A."/>
            <person name="Camargo A.A."/>
            <person name="Cardoso D.D.P."/>
            <person name="Carneiro N.P."/>
            <person name="Carraro D.M."/>
            <person name="Carvalho C.M.B."/>
            <person name="Cascardo J.C.M."/>
            <person name="Cavada B.S."/>
            <person name="Chueire L.M.O."/>
            <person name="Creczynski-Pasa T.B."/>
            <person name="Cunha-Junior N.C."/>
            <person name="Fagundes N."/>
            <person name="Falcao C.L."/>
            <person name="Fantinatti F."/>
            <person name="Farias I.P."/>
            <person name="Felipe M.S.S."/>
            <person name="Ferrari L.P."/>
            <person name="Ferro J.A."/>
            <person name="Ferro M.I.T."/>
            <person name="Franco G.R."/>
            <person name="Freitas N.S.A."/>
            <person name="Furlan L.R."/>
            <person name="Gazzinelli R.T."/>
            <person name="Gomes E.A."/>
            <person name="Goncalves P.R."/>
            <person name="Grangeiro T.B."/>
            <person name="Grattapaglia D."/>
            <person name="Grisard E.C."/>
            <person name="Hanna E.S."/>
            <person name="Jardim S.N."/>
            <person name="Laurino J."/>
            <person name="Leoi L.C.T."/>
            <person name="Lima L.F.A."/>
            <person name="Loureiro M.F."/>
            <person name="Lyra M.C.C.P."/>
            <person name="Madeira H.M.F."/>
            <person name="Manfio G.P."/>
            <person name="Maranhao A.Q."/>
            <person name="Martins W.S."/>
            <person name="di Mauro S.M.Z."/>
            <person name="de Medeiros S.R.B."/>
            <person name="Meissner R.V."/>
            <person name="Moreira M.A.M."/>
            <person name="Nascimento F.F."/>
            <person name="Nicolas M.F."/>
            <person name="Oliveira J.G."/>
            <person name="Oliveira S.C."/>
            <person name="Paixao R.F.C."/>
            <person name="Parente J.A."/>
            <person name="Pedrosa F.O."/>
            <person name="Pena S.D.J."/>
            <person name="Pereira J.O."/>
            <person name="Pereira M."/>
            <person name="Pinto L.S.R.C."/>
            <person name="Pinto L.S."/>
            <person name="Porto J.I.R."/>
            <person name="Potrich D.P."/>
            <person name="Ramalho-Neto C.E."/>
            <person name="Reis A.M.M."/>
            <person name="Rigo L.U."/>
            <person name="Rondinelli E."/>
            <person name="Santos E.B.P."/>
            <person name="Santos F.R."/>
            <person name="Schneider M.P.C."/>
            <person name="Seuanez H.N."/>
            <person name="Silva A.M.R."/>
            <person name="da Silva A.L.C."/>
            <person name="Silva D.W."/>
            <person name="Silva R."/>
            <person name="Simoes I.C."/>
            <person name="Simon D."/>
            <person name="Soares C.M.A."/>
            <person name="Soares R.B.A."/>
            <person name="Souza E.M."/>
            <person name="Souza K.R.L."/>
            <person name="Souza R.C."/>
            <person name="Steffens M.B.R."/>
            <person name="Steindel M."/>
            <person name="Teixeira S.R."/>
            <person name="Urmenyi T."/>
            <person name="Vettore A."/>
            <person name="Wassem R."/>
            <person name="Zaha A."/>
            <person name="Simpson A.J.G."/>
        </authorList>
    </citation>
    <scope>NUCLEOTIDE SEQUENCE [LARGE SCALE GENOMIC DNA]</scope>
    <source>
        <strain>ATCC 12472 / DSM 30191 / JCM 1249 / CCUG 213 / NBRC 12614 / NCIMB 9131 / NCTC 9757 / MK</strain>
    </source>
</reference>